<accession>C3P4C3</accession>
<name>LUTA1_BACAA</name>
<gene>
    <name evidence="1" type="primary">lutA1</name>
    <name type="ordered locus">BAA_1382</name>
</gene>
<feature type="chain" id="PRO_0000384019" description="Lactate utilization protein A 1">
    <location>
        <begin position="1"/>
        <end position="239"/>
    </location>
</feature>
<reference key="1">
    <citation type="submission" date="2009-04" db="EMBL/GenBank/DDBJ databases">
        <title>Genome sequence of Bacillus anthracis A0248.</title>
        <authorList>
            <person name="Dodson R.J."/>
            <person name="Munk A.C."/>
            <person name="Bruce D."/>
            <person name="Detter C."/>
            <person name="Tapia R."/>
            <person name="Sutton G."/>
            <person name="Sims D."/>
            <person name="Brettin T."/>
        </authorList>
    </citation>
    <scope>NUCLEOTIDE SEQUENCE [LARGE SCALE GENOMIC DNA]</scope>
    <source>
        <strain>A0248</strain>
    </source>
</reference>
<comment type="function">
    <text evidence="1">Is involved in L-lactate degradation and allows cells to grow with lactate as the sole carbon source.</text>
</comment>
<comment type="similarity">
    <text evidence="1">Belongs to the LutA/YkgE family.</text>
</comment>
<protein>
    <recommendedName>
        <fullName evidence="1">Lactate utilization protein A 1</fullName>
    </recommendedName>
</protein>
<organism>
    <name type="scientific">Bacillus anthracis (strain A0248)</name>
    <dbReference type="NCBI Taxonomy" id="592021"/>
    <lineage>
        <taxon>Bacteria</taxon>
        <taxon>Bacillati</taxon>
        <taxon>Bacillota</taxon>
        <taxon>Bacilli</taxon>
        <taxon>Bacillales</taxon>
        <taxon>Bacillaceae</taxon>
        <taxon>Bacillus</taxon>
        <taxon>Bacillus cereus group</taxon>
    </lineage>
</organism>
<sequence>MKVTLFVTCLVDMFETNVGKATVEVLERLGCEIEFPEAQVCCGQPAYNSGHVEAAKEAMKHMIETFEDAEYIVTPSGSCATMFHEYPHVFKDDPKWAKRAQKVADKTYEFTQFIVDVLKVTDVGASLPGIATIHKSCHMTRMLGVTEAPGILLSNVKGLTVRELPNVQNCCGFGGTFSVKMTPISEQMVDEKVDSAMETGADYLIGADCGCLLNIGGRIERLGKEIKVMHIAEVLNSRS</sequence>
<proteinExistence type="inferred from homology"/>
<dbReference type="EMBL" id="CP001598">
    <property type="protein sequence ID" value="ACQ47176.1"/>
    <property type="molecule type" value="Genomic_DNA"/>
</dbReference>
<dbReference type="RefSeq" id="WP_000869149.1">
    <property type="nucleotide sequence ID" value="NC_012659.1"/>
</dbReference>
<dbReference type="SMR" id="C3P4C3"/>
<dbReference type="KEGG" id="bai:BAA_1382"/>
<dbReference type="HOGENOM" id="CLU_023081_1_0_9"/>
<dbReference type="GO" id="GO:0005829">
    <property type="term" value="C:cytosol"/>
    <property type="evidence" value="ECO:0007669"/>
    <property type="project" value="TreeGrafter"/>
</dbReference>
<dbReference type="GO" id="GO:0016491">
    <property type="term" value="F:oxidoreductase activity"/>
    <property type="evidence" value="ECO:0007669"/>
    <property type="project" value="UniProtKB-ARBA"/>
</dbReference>
<dbReference type="GO" id="GO:0006089">
    <property type="term" value="P:lactate metabolic process"/>
    <property type="evidence" value="ECO:0007669"/>
    <property type="project" value="UniProtKB-UniRule"/>
</dbReference>
<dbReference type="HAMAP" id="MF_02105">
    <property type="entry name" value="LutA"/>
    <property type="match status" value="1"/>
</dbReference>
<dbReference type="InterPro" id="IPR004017">
    <property type="entry name" value="Cys_rich_dom"/>
</dbReference>
<dbReference type="InterPro" id="IPR022822">
    <property type="entry name" value="LutA"/>
</dbReference>
<dbReference type="PANTHER" id="PTHR30296:SF0">
    <property type="entry name" value="LACTATE UTILIZATION PROTEIN A"/>
    <property type="match status" value="1"/>
</dbReference>
<dbReference type="PANTHER" id="PTHR30296">
    <property type="entry name" value="UNCHARACTERIZED PROTEIN YKGE"/>
    <property type="match status" value="1"/>
</dbReference>
<dbReference type="Pfam" id="PF02754">
    <property type="entry name" value="CCG"/>
    <property type="match status" value="2"/>
</dbReference>
<evidence type="ECO:0000255" key="1">
    <source>
        <dbReference type="HAMAP-Rule" id="MF_02105"/>
    </source>
</evidence>